<reference key="1">
    <citation type="journal article" date="1995" name="J. Biol. Chem.">
        <title>The cathodic hemoglobin of Anguilla anguilla. Amino acid sequence and oxygen equilibria of a reverse Bohr effect hemoglobin with high oxygen affinity and high phosphate sensitivity.</title>
        <authorList>
            <person name="Fago A."/>
            <person name="Carratore V."/>
            <person name="di Prisco G."/>
            <person name="Feuerlein R.J."/>
            <person name="Sottrup-Jensen L."/>
            <person name="Weber R.E."/>
        </authorList>
    </citation>
    <scope>PROTEIN SEQUENCE OF 2-143</scope>
    <scope>ACETYLATION AT SER-2</scope>
    <source>
        <tissue>Erythrocyte</tissue>
    </source>
</reference>
<name>HBAC_ANGAN</name>
<evidence type="ECO:0000250" key="1"/>
<evidence type="ECO:0000255" key="2">
    <source>
        <dbReference type="PROSITE-ProRule" id="PRU00238"/>
    </source>
</evidence>
<evidence type="ECO:0000269" key="3">
    <source>
    </source>
</evidence>
<organism>
    <name type="scientific">Anguilla anguilla</name>
    <name type="common">European freshwater eel</name>
    <name type="synonym">Muraena anguilla</name>
    <dbReference type="NCBI Taxonomy" id="7936"/>
    <lineage>
        <taxon>Eukaryota</taxon>
        <taxon>Metazoa</taxon>
        <taxon>Chordata</taxon>
        <taxon>Craniata</taxon>
        <taxon>Vertebrata</taxon>
        <taxon>Euteleostomi</taxon>
        <taxon>Actinopterygii</taxon>
        <taxon>Neopterygii</taxon>
        <taxon>Teleostei</taxon>
        <taxon>Anguilliformes</taxon>
        <taxon>Anguillidae</taxon>
        <taxon>Anguilla</taxon>
    </lineage>
</organism>
<accession>P80726</accession>
<protein>
    <recommendedName>
        <fullName>Hemoglobin cathodic subunit alpha</fullName>
    </recommendedName>
    <alternativeName>
        <fullName>Hemoglobin cathodic alpha chain</fullName>
    </alternativeName>
</protein>
<feature type="initiator methionine" description="Removed" evidence="1">
    <location>
        <position position="1"/>
    </location>
</feature>
<feature type="chain" id="PRO_0000052550" description="Hemoglobin cathodic subunit alpha">
    <location>
        <begin position="2"/>
        <end position="143"/>
    </location>
</feature>
<feature type="domain" description="Globin" evidence="2">
    <location>
        <begin position="2"/>
        <end position="143"/>
    </location>
</feature>
<feature type="binding site" evidence="2">
    <location>
        <position position="60"/>
    </location>
    <ligand>
        <name>O2</name>
        <dbReference type="ChEBI" id="CHEBI:15379"/>
    </ligand>
</feature>
<feature type="binding site" description="proximal binding residue" evidence="2">
    <location>
        <position position="89"/>
    </location>
    <ligand>
        <name>heme b</name>
        <dbReference type="ChEBI" id="CHEBI:60344"/>
    </ligand>
    <ligandPart>
        <name>Fe</name>
        <dbReference type="ChEBI" id="CHEBI:18248"/>
    </ligandPart>
</feature>
<feature type="modified residue" description="N-acetylserine" evidence="3">
    <location>
        <position position="2"/>
    </location>
</feature>
<dbReference type="RefSeq" id="XP_035254443.1">
    <property type="nucleotide sequence ID" value="XM_035398552.1"/>
</dbReference>
<dbReference type="SMR" id="P80726"/>
<dbReference type="iPTMnet" id="P80726"/>
<dbReference type="GeneID" id="118216923"/>
<dbReference type="OMA" id="VIAIMYP"/>
<dbReference type="OrthoDB" id="8751793at2759"/>
<dbReference type="GO" id="GO:0072562">
    <property type="term" value="C:blood microparticle"/>
    <property type="evidence" value="ECO:0007669"/>
    <property type="project" value="TreeGrafter"/>
</dbReference>
<dbReference type="GO" id="GO:0031838">
    <property type="term" value="C:haptoglobin-hemoglobin complex"/>
    <property type="evidence" value="ECO:0007669"/>
    <property type="project" value="TreeGrafter"/>
</dbReference>
<dbReference type="GO" id="GO:0005833">
    <property type="term" value="C:hemoglobin complex"/>
    <property type="evidence" value="ECO:0007669"/>
    <property type="project" value="InterPro"/>
</dbReference>
<dbReference type="GO" id="GO:0031720">
    <property type="term" value="F:haptoglobin binding"/>
    <property type="evidence" value="ECO:0007669"/>
    <property type="project" value="TreeGrafter"/>
</dbReference>
<dbReference type="GO" id="GO:0020037">
    <property type="term" value="F:heme binding"/>
    <property type="evidence" value="ECO:0007669"/>
    <property type="project" value="InterPro"/>
</dbReference>
<dbReference type="GO" id="GO:0046872">
    <property type="term" value="F:metal ion binding"/>
    <property type="evidence" value="ECO:0007669"/>
    <property type="project" value="UniProtKB-KW"/>
</dbReference>
<dbReference type="GO" id="GO:0043177">
    <property type="term" value="F:organic acid binding"/>
    <property type="evidence" value="ECO:0007669"/>
    <property type="project" value="TreeGrafter"/>
</dbReference>
<dbReference type="GO" id="GO:0019825">
    <property type="term" value="F:oxygen binding"/>
    <property type="evidence" value="ECO:0007669"/>
    <property type="project" value="InterPro"/>
</dbReference>
<dbReference type="GO" id="GO:0005344">
    <property type="term" value="F:oxygen carrier activity"/>
    <property type="evidence" value="ECO:0007669"/>
    <property type="project" value="UniProtKB-KW"/>
</dbReference>
<dbReference type="GO" id="GO:0004601">
    <property type="term" value="F:peroxidase activity"/>
    <property type="evidence" value="ECO:0007669"/>
    <property type="project" value="TreeGrafter"/>
</dbReference>
<dbReference type="GO" id="GO:0042744">
    <property type="term" value="P:hydrogen peroxide catabolic process"/>
    <property type="evidence" value="ECO:0007669"/>
    <property type="project" value="TreeGrafter"/>
</dbReference>
<dbReference type="CDD" id="cd08927">
    <property type="entry name" value="Hb-alpha-like"/>
    <property type="match status" value="1"/>
</dbReference>
<dbReference type="FunFam" id="1.10.490.10:FF:000002">
    <property type="entry name" value="Hemoglobin subunit alpha"/>
    <property type="match status" value="1"/>
</dbReference>
<dbReference type="Gene3D" id="1.10.490.10">
    <property type="entry name" value="Globins"/>
    <property type="match status" value="1"/>
</dbReference>
<dbReference type="InterPro" id="IPR000971">
    <property type="entry name" value="Globin"/>
</dbReference>
<dbReference type="InterPro" id="IPR009050">
    <property type="entry name" value="Globin-like_sf"/>
</dbReference>
<dbReference type="InterPro" id="IPR012292">
    <property type="entry name" value="Globin/Proto"/>
</dbReference>
<dbReference type="InterPro" id="IPR002338">
    <property type="entry name" value="Hemoglobin_a-typ"/>
</dbReference>
<dbReference type="InterPro" id="IPR050056">
    <property type="entry name" value="Hemoglobin_oxygen_transport"/>
</dbReference>
<dbReference type="PANTHER" id="PTHR11442:SF91">
    <property type="entry name" value="EMBRYONIC ALPHA GLOBIN E1-RELATED"/>
    <property type="match status" value="1"/>
</dbReference>
<dbReference type="PANTHER" id="PTHR11442">
    <property type="entry name" value="HEMOGLOBIN FAMILY MEMBER"/>
    <property type="match status" value="1"/>
</dbReference>
<dbReference type="Pfam" id="PF00042">
    <property type="entry name" value="Globin"/>
    <property type="match status" value="1"/>
</dbReference>
<dbReference type="PRINTS" id="PR00612">
    <property type="entry name" value="ALPHAHAEM"/>
</dbReference>
<dbReference type="SUPFAM" id="SSF46458">
    <property type="entry name" value="Globin-like"/>
    <property type="match status" value="1"/>
</dbReference>
<dbReference type="PROSITE" id="PS01033">
    <property type="entry name" value="GLOBIN"/>
    <property type="match status" value="1"/>
</dbReference>
<keyword id="KW-0007">Acetylation</keyword>
<keyword id="KW-0903">Direct protein sequencing</keyword>
<keyword id="KW-0349">Heme</keyword>
<keyword id="KW-0408">Iron</keyword>
<keyword id="KW-0479">Metal-binding</keyword>
<keyword id="KW-0561">Oxygen transport</keyword>
<keyword id="KW-0813">Transport</keyword>
<comment type="function">
    <text>Involved in oxygen transport from gills to the various peripheral tissues.</text>
</comment>
<comment type="subunit">
    <text>Heterotetramer of two alpha chains and two beta chains.</text>
</comment>
<comment type="tissue specificity">
    <text>Red blood cells.</text>
</comment>
<comment type="miscellaneous">
    <text>This fish has two hemoglobins: cathodic and anodic. The cathodic Hb and anodic Hb display small and large Bohr effects respectively. In addition, the cathodic Hb displays a reverse Bohr effect and appreciable phosphate effects.</text>
</comment>
<comment type="similarity">
    <text evidence="2">Belongs to the globin family.</text>
</comment>
<proteinExistence type="evidence at protein level"/>
<sequence length="143" mass="15320">MSLTAKDKSLITGFWQKISSKADDLGAEALSRMIVVFPATKVYFSHWPDLGPGSPSVKKHGKVIMAAVGDAVGKMNDLVGALSALSDLHAFKMRIDPGNFKTLSHNILVACAVNFPVDFTAEVHVAMDKFLAALGAALSDKYR</sequence>